<proteinExistence type="inferred from homology"/>
<sequence>MRKILKLKIGRDELVFETGFMAKQANGSVLATYGGSSVLATVCCSSNVREDLDFVPLSVEYNEKYYAAGKIPGGFIKREGKPKDKEILVSRLIDRPMRPLFDKRFGREIQVIPTTLATDQLNPPDIVGMNAAFTAVFLSDIPFNGPIAAVRMVYLNGKFIVNPSFEEIHDSDLDIVVAGSLNGITMVEGGANEVGEDILLSAIDGAHEYIKQICNAQKEFLDIVGKKEKLPLAFEEKIFEFKDELRDFVYADLKEACFVKGKLNRDKAITLLRNKSYEYFSSLEKLTDSNESLFHKAFDDFEKEIVRSSILNDNIRTDGRTPNEIRDIISEVDILSRTHGSALFTRGETQALAVTTLGTSIDEQIMDDIDGDKRLNFMLHYNFPPFSVGETGRLMTGRREIGHGHLAQRALESMVPGKNDFPYTIRVVSEVLESNGSSSMATVCAGSMSLMSAGVPVKGQVAGIAMGLISEGDKYVVLSDILGEEDHLGDMDFKVAGTKNGITGFQMDIKIENVTKDLMRDALEQARIGRIHILSIMNTVISNSRVGISKYAPKIVQLQIDIDKISLVIGSTGKTVKAITDEFEVKVQIEQNGKIILFGDDDFKMQKAKERIESIVREPKVGEIYEGTVKKINSFGAFIELTPAKEGFLSTRLKPRDSKYGSGRFGNSNRYSRFGGGGENIRGNAGLVRPPKLEEGQRIKVKIIDIDKFGKIDLEIVRDKDY</sequence>
<name>PNP_BORBZ</name>
<keyword id="KW-0963">Cytoplasm</keyword>
<keyword id="KW-0460">Magnesium</keyword>
<keyword id="KW-0479">Metal-binding</keyword>
<keyword id="KW-0548">Nucleotidyltransferase</keyword>
<keyword id="KW-0694">RNA-binding</keyword>
<keyword id="KW-0808">Transferase</keyword>
<gene>
    <name evidence="1" type="primary">pnp</name>
    <name type="ordered locus">BbuZS7_0835</name>
</gene>
<protein>
    <recommendedName>
        <fullName evidence="1">Polyribonucleotide nucleotidyltransferase</fullName>
        <ecNumber evidence="1">2.7.7.8</ecNumber>
    </recommendedName>
    <alternativeName>
        <fullName evidence="1">Polynucleotide phosphorylase</fullName>
        <shortName evidence="1">PNPase</shortName>
    </alternativeName>
</protein>
<dbReference type="EC" id="2.7.7.8" evidence="1"/>
<dbReference type="EMBL" id="CP001205">
    <property type="protein sequence ID" value="ACK74607.1"/>
    <property type="molecule type" value="Genomic_DNA"/>
</dbReference>
<dbReference type="RefSeq" id="WP_002656770.1">
    <property type="nucleotide sequence ID" value="NC_011728.1"/>
</dbReference>
<dbReference type="SMR" id="B7J0Q1"/>
<dbReference type="GeneID" id="56567384"/>
<dbReference type="KEGG" id="bbz:BbuZS7_0835"/>
<dbReference type="HOGENOM" id="CLU_004217_2_2_12"/>
<dbReference type="Proteomes" id="UP000006901">
    <property type="component" value="Chromosome"/>
</dbReference>
<dbReference type="GO" id="GO:0005829">
    <property type="term" value="C:cytosol"/>
    <property type="evidence" value="ECO:0007669"/>
    <property type="project" value="TreeGrafter"/>
</dbReference>
<dbReference type="GO" id="GO:0000175">
    <property type="term" value="F:3'-5'-RNA exonuclease activity"/>
    <property type="evidence" value="ECO:0007669"/>
    <property type="project" value="TreeGrafter"/>
</dbReference>
<dbReference type="GO" id="GO:0000287">
    <property type="term" value="F:magnesium ion binding"/>
    <property type="evidence" value="ECO:0007669"/>
    <property type="project" value="UniProtKB-UniRule"/>
</dbReference>
<dbReference type="GO" id="GO:0004654">
    <property type="term" value="F:polyribonucleotide nucleotidyltransferase activity"/>
    <property type="evidence" value="ECO:0007669"/>
    <property type="project" value="UniProtKB-UniRule"/>
</dbReference>
<dbReference type="GO" id="GO:0003723">
    <property type="term" value="F:RNA binding"/>
    <property type="evidence" value="ECO:0007669"/>
    <property type="project" value="UniProtKB-UniRule"/>
</dbReference>
<dbReference type="GO" id="GO:0006402">
    <property type="term" value="P:mRNA catabolic process"/>
    <property type="evidence" value="ECO:0007669"/>
    <property type="project" value="UniProtKB-UniRule"/>
</dbReference>
<dbReference type="GO" id="GO:0006396">
    <property type="term" value="P:RNA processing"/>
    <property type="evidence" value="ECO:0007669"/>
    <property type="project" value="InterPro"/>
</dbReference>
<dbReference type="CDD" id="cd02393">
    <property type="entry name" value="KH-I_PNPase"/>
    <property type="match status" value="1"/>
</dbReference>
<dbReference type="CDD" id="cd11363">
    <property type="entry name" value="RNase_PH_PNPase_1"/>
    <property type="match status" value="1"/>
</dbReference>
<dbReference type="CDD" id="cd11364">
    <property type="entry name" value="RNase_PH_PNPase_2"/>
    <property type="match status" value="1"/>
</dbReference>
<dbReference type="FunFam" id="3.30.1370.10:FF:000001">
    <property type="entry name" value="Polyribonucleotide nucleotidyltransferase"/>
    <property type="match status" value="1"/>
</dbReference>
<dbReference type="FunFam" id="3.30.230.70:FF:000001">
    <property type="entry name" value="Polyribonucleotide nucleotidyltransferase"/>
    <property type="match status" value="1"/>
</dbReference>
<dbReference type="FunFam" id="3.30.230.70:FF:000002">
    <property type="entry name" value="Polyribonucleotide nucleotidyltransferase"/>
    <property type="match status" value="1"/>
</dbReference>
<dbReference type="Gene3D" id="3.30.230.70">
    <property type="entry name" value="GHMP Kinase, N-terminal domain"/>
    <property type="match status" value="2"/>
</dbReference>
<dbReference type="Gene3D" id="3.30.1370.10">
    <property type="entry name" value="K Homology domain, type 1"/>
    <property type="match status" value="1"/>
</dbReference>
<dbReference type="Gene3D" id="2.40.50.140">
    <property type="entry name" value="Nucleic acid-binding proteins"/>
    <property type="match status" value="1"/>
</dbReference>
<dbReference type="HAMAP" id="MF_01595">
    <property type="entry name" value="PNPase"/>
    <property type="match status" value="1"/>
</dbReference>
<dbReference type="InterPro" id="IPR001247">
    <property type="entry name" value="ExoRNase_PH_dom1"/>
</dbReference>
<dbReference type="InterPro" id="IPR015847">
    <property type="entry name" value="ExoRNase_PH_dom2"/>
</dbReference>
<dbReference type="InterPro" id="IPR036345">
    <property type="entry name" value="ExoRNase_PH_dom2_sf"/>
</dbReference>
<dbReference type="InterPro" id="IPR004087">
    <property type="entry name" value="KH_dom"/>
</dbReference>
<dbReference type="InterPro" id="IPR004088">
    <property type="entry name" value="KH_dom_type_1"/>
</dbReference>
<dbReference type="InterPro" id="IPR036612">
    <property type="entry name" value="KH_dom_type_1_sf"/>
</dbReference>
<dbReference type="InterPro" id="IPR012340">
    <property type="entry name" value="NA-bd_OB-fold"/>
</dbReference>
<dbReference type="InterPro" id="IPR012162">
    <property type="entry name" value="PNPase"/>
</dbReference>
<dbReference type="InterPro" id="IPR027408">
    <property type="entry name" value="PNPase/RNase_PH_dom_sf"/>
</dbReference>
<dbReference type="InterPro" id="IPR015848">
    <property type="entry name" value="PNPase_PH_RNA-bd_bac/org-type"/>
</dbReference>
<dbReference type="InterPro" id="IPR020568">
    <property type="entry name" value="Ribosomal_Su5_D2-typ_SF"/>
</dbReference>
<dbReference type="InterPro" id="IPR003029">
    <property type="entry name" value="S1_domain"/>
</dbReference>
<dbReference type="NCBIfam" id="TIGR03591">
    <property type="entry name" value="polynuc_phos"/>
    <property type="match status" value="1"/>
</dbReference>
<dbReference type="NCBIfam" id="NF008805">
    <property type="entry name" value="PRK11824.1"/>
    <property type="match status" value="1"/>
</dbReference>
<dbReference type="PANTHER" id="PTHR11252">
    <property type="entry name" value="POLYRIBONUCLEOTIDE NUCLEOTIDYLTRANSFERASE"/>
    <property type="match status" value="1"/>
</dbReference>
<dbReference type="PANTHER" id="PTHR11252:SF0">
    <property type="entry name" value="POLYRIBONUCLEOTIDE NUCLEOTIDYLTRANSFERASE 1, MITOCHONDRIAL"/>
    <property type="match status" value="1"/>
</dbReference>
<dbReference type="Pfam" id="PF00013">
    <property type="entry name" value="KH_1"/>
    <property type="match status" value="1"/>
</dbReference>
<dbReference type="Pfam" id="PF03726">
    <property type="entry name" value="PNPase"/>
    <property type="match status" value="1"/>
</dbReference>
<dbReference type="Pfam" id="PF01138">
    <property type="entry name" value="RNase_PH"/>
    <property type="match status" value="2"/>
</dbReference>
<dbReference type="Pfam" id="PF03725">
    <property type="entry name" value="RNase_PH_C"/>
    <property type="match status" value="2"/>
</dbReference>
<dbReference type="Pfam" id="PF00575">
    <property type="entry name" value="S1"/>
    <property type="match status" value="1"/>
</dbReference>
<dbReference type="PIRSF" id="PIRSF005499">
    <property type="entry name" value="PNPase"/>
    <property type="match status" value="1"/>
</dbReference>
<dbReference type="SMART" id="SM00322">
    <property type="entry name" value="KH"/>
    <property type="match status" value="1"/>
</dbReference>
<dbReference type="SMART" id="SM00316">
    <property type="entry name" value="S1"/>
    <property type="match status" value="1"/>
</dbReference>
<dbReference type="SUPFAM" id="SSF54791">
    <property type="entry name" value="Eukaryotic type KH-domain (KH-domain type I)"/>
    <property type="match status" value="1"/>
</dbReference>
<dbReference type="SUPFAM" id="SSF50249">
    <property type="entry name" value="Nucleic acid-binding proteins"/>
    <property type="match status" value="1"/>
</dbReference>
<dbReference type="SUPFAM" id="SSF55666">
    <property type="entry name" value="Ribonuclease PH domain 2-like"/>
    <property type="match status" value="2"/>
</dbReference>
<dbReference type="SUPFAM" id="SSF54211">
    <property type="entry name" value="Ribosomal protein S5 domain 2-like"/>
    <property type="match status" value="2"/>
</dbReference>
<dbReference type="PROSITE" id="PS50084">
    <property type="entry name" value="KH_TYPE_1"/>
    <property type="match status" value="1"/>
</dbReference>
<dbReference type="PROSITE" id="PS50126">
    <property type="entry name" value="S1"/>
    <property type="match status" value="1"/>
</dbReference>
<feature type="chain" id="PRO_1000147889" description="Polyribonucleotide nucleotidyltransferase">
    <location>
        <begin position="1"/>
        <end position="722"/>
    </location>
</feature>
<feature type="domain" description="KH" evidence="1">
    <location>
        <begin position="553"/>
        <end position="612"/>
    </location>
</feature>
<feature type="domain" description="S1 motif" evidence="1">
    <location>
        <begin position="622"/>
        <end position="717"/>
    </location>
</feature>
<feature type="binding site" evidence="1">
    <location>
        <position position="486"/>
    </location>
    <ligand>
        <name>Mg(2+)</name>
        <dbReference type="ChEBI" id="CHEBI:18420"/>
    </ligand>
</feature>
<feature type="binding site" evidence="1">
    <location>
        <position position="492"/>
    </location>
    <ligand>
        <name>Mg(2+)</name>
        <dbReference type="ChEBI" id="CHEBI:18420"/>
    </ligand>
</feature>
<evidence type="ECO:0000255" key="1">
    <source>
        <dbReference type="HAMAP-Rule" id="MF_01595"/>
    </source>
</evidence>
<comment type="function">
    <text evidence="1">Involved in mRNA degradation. Catalyzes the phosphorolysis of single-stranded polyribonucleotides processively in the 3'- to 5'-direction.</text>
</comment>
<comment type="catalytic activity">
    <reaction evidence="1">
        <text>RNA(n+1) + phosphate = RNA(n) + a ribonucleoside 5'-diphosphate</text>
        <dbReference type="Rhea" id="RHEA:22096"/>
        <dbReference type="Rhea" id="RHEA-COMP:14527"/>
        <dbReference type="Rhea" id="RHEA-COMP:17342"/>
        <dbReference type="ChEBI" id="CHEBI:43474"/>
        <dbReference type="ChEBI" id="CHEBI:57930"/>
        <dbReference type="ChEBI" id="CHEBI:140395"/>
        <dbReference type="EC" id="2.7.7.8"/>
    </reaction>
</comment>
<comment type="cofactor">
    <cofactor evidence="1">
        <name>Mg(2+)</name>
        <dbReference type="ChEBI" id="CHEBI:18420"/>
    </cofactor>
</comment>
<comment type="subcellular location">
    <subcellularLocation>
        <location evidence="1">Cytoplasm</location>
    </subcellularLocation>
</comment>
<comment type="similarity">
    <text evidence="1">Belongs to the polyribonucleotide nucleotidyltransferase family.</text>
</comment>
<reference key="1">
    <citation type="journal article" date="2011" name="J. Bacteriol.">
        <title>Whole-genome sequences of thirteen isolates of Borrelia burgdorferi.</title>
        <authorList>
            <person name="Schutzer S.E."/>
            <person name="Fraser-Liggett C.M."/>
            <person name="Casjens S.R."/>
            <person name="Qiu W.G."/>
            <person name="Dunn J.J."/>
            <person name="Mongodin E.F."/>
            <person name="Luft B.J."/>
        </authorList>
    </citation>
    <scope>NUCLEOTIDE SEQUENCE [LARGE SCALE GENOMIC DNA]</scope>
    <source>
        <strain>ZS7</strain>
    </source>
</reference>
<accession>B7J0Q1</accession>
<organism>
    <name type="scientific">Borreliella burgdorferi (strain ZS7)</name>
    <name type="common">Borrelia burgdorferi</name>
    <dbReference type="NCBI Taxonomy" id="445985"/>
    <lineage>
        <taxon>Bacteria</taxon>
        <taxon>Pseudomonadati</taxon>
        <taxon>Spirochaetota</taxon>
        <taxon>Spirochaetia</taxon>
        <taxon>Spirochaetales</taxon>
        <taxon>Borreliaceae</taxon>
        <taxon>Borreliella</taxon>
    </lineage>
</organism>